<proteinExistence type="evidence at protein level"/>
<reference key="1">
    <citation type="journal article" date="1987" name="EMBO J.">
        <title>cDNA cloning and complete primary structure of the alpha subunit of a leukocyte adhesion glycoprotein, p150,95.</title>
        <authorList>
            <person name="Corbi A.L."/>
            <person name="Miller L.J."/>
            <person name="O'Connor K."/>
            <person name="Larson R.S."/>
            <person name="Springer T.A."/>
        </authorList>
    </citation>
    <scope>NUCLEOTIDE SEQUENCE [MRNA]</scope>
    <scope>VARIANT THR-251</scope>
</reference>
<reference key="2">
    <citation type="journal article" date="1990" name="J. Biol. Chem.">
        <title>Genomic structure of an integrin alpha subunit, the leukocyte p150,95 molecule.</title>
        <authorList>
            <person name="Corbi A.L."/>
            <person name="Garcia-Aguilar J."/>
            <person name="Springer T.A."/>
        </authorList>
    </citation>
    <scope>NUCLEOTIDE SEQUENCE [GENOMIC DNA]</scope>
    <scope>VARIANTS LEU-201 AND THR-251</scope>
</reference>
<reference key="3">
    <citation type="journal article" date="1990" name="J. Biol. Chem.">
        <authorList>
            <person name="Corbi A.L."/>
            <person name="Garcia-Aguilar J."/>
            <person name="Springer T.A."/>
        </authorList>
    </citation>
    <scope>ERRATUM OF PUBMED:2303426</scope>
</reference>
<reference key="4">
    <citation type="journal article" date="2004" name="Genome Res.">
        <title>The status, quality, and expansion of the NIH full-length cDNA project: the Mammalian Gene Collection (MGC).</title>
        <authorList>
            <consortium name="The MGC Project Team"/>
        </authorList>
    </citation>
    <scope>NUCLEOTIDE SEQUENCE [LARGE SCALE MRNA]</scope>
    <scope>VARIANT LYS-547</scope>
    <source>
        <tissue>Blood</tissue>
    </source>
</reference>
<reference key="5">
    <citation type="journal article" date="1987" name="J. Immunol.">
        <title>Purification and alpha subunit N-terminal sequences of human Mac-1 and p150,95 leukocyte adhesion proteins.</title>
        <authorList>
            <person name="Miller L.J."/>
            <person name="Wiebe M."/>
            <person name="Springer T.A."/>
        </authorList>
    </citation>
    <scope>PROTEIN SEQUENCE OF 20-43</scope>
</reference>
<reference key="6">
    <citation type="journal article" date="2009" name="J. Proteome Res.">
        <title>Glycoproteomics analysis of human liver tissue by combination of multiple enzyme digestion and hydrazide chemistry.</title>
        <authorList>
            <person name="Chen R."/>
            <person name="Jiang X."/>
            <person name="Sun D."/>
            <person name="Han G."/>
            <person name="Wang F."/>
            <person name="Ye M."/>
            <person name="Wang L."/>
            <person name="Zou H."/>
        </authorList>
    </citation>
    <scope>GLYCOSYLATION [LARGE SCALE ANALYSIS] AT ASN-899</scope>
    <source>
        <tissue>Liver</tissue>
    </source>
</reference>
<reference key="7">
    <citation type="journal article" date="2010" name="EMBO J.">
        <title>Structure of an integrin with an alphaI domain, complement receptor type 4.</title>
        <authorList>
            <person name="Xie C."/>
            <person name="Zhu J."/>
            <person name="Chen X."/>
            <person name="Mi L."/>
            <person name="Nishida N."/>
            <person name="Springer T.A."/>
        </authorList>
    </citation>
    <scope>X-RAY CRYSTALLOGRAPHY (3.5 ANGSTROMS) OF 20-1103 IN COMPLEX WITH ITGB2</scope>
    <scope>GLYCOSYLATION AT ASN-61; ASN-392; ASN-697; ASN-735 AND ASN-899</scope>
    <scope>DISULFIDE BONDS</scope>
    <scope>METAL-BINDING SITES</scope>
    <scope>SUBUNIT</scope>
</reference>
<reference key="8">
    <citation type="journal article" date="2012" name="PLoS ONE">
        <title>Structure and binding interface of the cytosolic tails of alphaXbeta2 integrin.</title>
        <authorList>
            <person name="Chua G.L."/>
            <person name="Tang X.Y."/>
            <person name="Patra A.T."/>
            <person name="Tan S.M."/>
            <person name="Bhattacharjya S."/>
        </authorList>
    </citation>
    <scope>STRUCTURE BY NMR OF 1129-1163</scope>
</reference>
<reference key="9">
    <citation type="journal article" date="2011" name="Am. J. Hum. Genet.">
        <title>VPS35 mutations in Parkinson disease.</title>
        <authorList>
            <person name="Vilarino-Guell C."/>
            <person name="Wider C."/>
            <person name="Ross O.A."/>
            <person name="Dachsel J.C."/>
            <person name="Kachergus J.M."/>
            <person name="Lincoln S.J."/>
            <person name="Soto-Ortolaza A.I."/>
            <person name="Cobb S.A."/>
            <person name="Wilhoite G.J."/>
            <person name="Bacon J.A."/>
            <person name="Behrouz B."/>
            <person name="Melrose H.L."/>
            <person name="Hentati E."/>
            <person name="Puschmann A."/>
            <person name="Evans D.M."/>
            <person name="Conibear E."/>
            <person name="Wasserman W.W."/>
            <person name="Aasly J.O."/>
            <person name="Burkhard P.R."/>
            <person name="Djaldetti R."/>
            <person name="Ghika J."/>
            <person name="Hentati F."/>
            <person name="Krygowska-Wajs A."/>
            <person name="Lynch T."/>
            <person name="Melamed E."/>
            <person name="Rajput A."/>
            <person name="Rajput A.H."/>
            <person name="Solida A."/>
            <person name="Wu R.M."/>
            <person name="Uitti R.J."/>
            <person name="Wszolek Z.K."/>
            <person name="Vingerhoets F."/>
            <person name="Farrer M.J."/>
        </authorList>
    </citation>
    <scope>VARIANT VAL-1012</scope>
</reference>
<dbReference type="EMBL" id="M81695">
    <property type="protein sequence ID" value="AAA59180.1"/>
    <property type="molecule type" value="mRNA"/>
</dbReference>
<dbReference type="EMBL" id="M29165">
    <property type="status" value="NOT_ANNOTATED_CDS"/>
    <property type="molecule type" value="mRNA"/>
</dbReference>
<dbReference type="EMBL" id="M29487">
    <property type="protein sequence ID" value="AAA51620.1"/>
    <property type="status" value="ALT_SEQ"/>
    <property type="molecule type" value="Genomic_DNA"/>
</dbReference>
<dbReference type="EMBL" id="M29482">
    <property type="protein sequence ID" value="AAA51620.1"/>
    <property type="status" value="JOINED"/>
    <property type="molecule type" value="Genomic_DNA"/>
</dbReference>
<dbReference type="EMBL" id="M29483">
    <property type="protein sequence ID" value="AAA51620.1"/>
    <property type="status" value="JOINED"/>
    <property type="molecule type" value="Genomic_DNA"/>
</dbReference>
<dbReference type="EMBL" id="M29484">
    <property type="protein sequence ID" value="AAA51620.1"/>
    <property type="status" value="JOINED"/>
    <property type="molecule type" value="Genomic_DNA"/>
</dbReference>
<dbReference type="EMBL" id="M29485">
    <property type="protein sequence ID" value="AAA51620.1"/>
    <property type="status" value="JOINED"/>
    <property type="molecule type" value="Genomic_DNA"/>
</dbReference>
<dbReference type="EMBL" id="M29486">
    <property type="protein sequence ID" value="AAA51620.1"/>
    <property type="status" value="JOINED"/>
    <property type="molecule type" value="Genomic_DNA"/>
</dbReference>
<dbReference type="EMBL" id="BC038237">
    <property type="protein sequence ID" value="AAH38237.1"/>
    <property type="molecule type" value="mRNA"/>
</dbReference>
<dbReference type="CCDS" id="CCDS10711.1"/>
<dbReference type="PIR" id="A36584">
    <property type="entry name" value="RWHU1C"/>
</dbReference>
<dbReference type="RefSeq" id="NP_000878.2">
    <property type="nucleotide sequence ID" value="NM_000887.4"/>
</dbReference>
<dbReference type="RefSeq" id="NP_001273304.1">
    <property type="nucleotide sequence ID" value="NM_001286375.1"/>
</dbReference>
<dbReference type="PDB" id="1N3Y">
    <property type="method" value="X-ray"/>
    <property type="resolution" value="1.65 A"/>
    <property type="chains" value="A=147-338"/>
</dbReference>
<dbReference type="PDB" id="2LUV">
    <property type="method" value="NMR"/>
    <property type="chains" value="A=1129-1163"/>
</dbReference>
<dbReference type="PDB" id="3K6S">
    <property type="method" value="X-ray"/>
    <property type="resolution" value="3.50 A"/>
    <property type="chains" value="A/C/E/G=20-1103"/>
</dbReference>
<dbReference type="PDB" id="3K71">
    <property type="method" value="X-ray"/>
    <property type="resolution" value="3.95 A"/>
    <property type="chains" value="A/C/E/G=20-1103"/>
</dbReference>
<dbReference type="PDB" id="3K72">
    <property type="method" value="X-ray"/>
    <property type="resolution" value="3.70 A"/>
    <property type="chains" value="A/C=20-1103"/>
</dbReference>
<dbReference type="PDB" id="4NEH">
    <property type="method" value="X-ray"/>
    <property type="resolution" value="2.75 A"/>
    <property type="chains" value="A=20-1101"/>
</dbReference>
<dbReference type="PDB" id="4NEN">
    <property type="method" value="X-ray"/>
    <property type="resolution" value="2.90 A"/>
    <property type="chains" value="A=20-1101"/>
</dbReference>
<dbReference type="PDB" id="5ES4">
    <property type="method" value="X-ray"/>
    <property type="resolution" value="3.30 A"/>
    <property type="chains" value="A/C/E/G=20-1103"/>
</dbReference>
<dbReference type="PDBsum" id="1N3Y"/>
<dbReference type="PDBsum" id="2LUV"/>
<dbReference type="PDBsum" id="3K6S"/>
<dbReference type="PDBsum" id="3K71"/>
<dbReference type="PDBsum" id="3K72"/>
<dbReference type="PDBsum" id="4NEH"/>
<dbReference type="PDBsum" id="4NEN"/>
<dbReference type="PDBsum" id="5ES4"/>
<dbReference type="BMRB" id="P20702"/>
<dbReference type="SMR" id="P20702"/>
<dbReference type="BioGRID" id="109893">
    <property type="interactions" value="4"/>
</dbReference>
<dbReference type="ComplexPortal" id="CPX-1827">
    <property type="entry name" value="Integrin alphaX-beta2 complex"/>
</dbReference>
<dbReference type="DIP" id="DIP-59369N"/>
<dbReference type="FunCoup" id="P20702">
    <property type="interactions" value="217"/>
</dbReference>
<dbReference type="IntAct" id="P20702">
    <property type="interactions" value="2"/>
</dbReference>
<dbReference type="STRING" id="9606.ENSP00000454623"/>
<dbReference type="DrugBank" id="DB00095">
    <property type="generic name" value="Efalizumab"/>
</dbReference>
<dbReference type="GlyConnect" id="1413">
    <property type="glycosylation" value="2 N-Linked glycans (3 sites)"/>
</dbReference>
<dbReference type="GlyCosmos" id="P20702">
    <property type="glycosylation" value="8 sites, 2 glycans"/>
</dbReference>
<dbReference type="GlyGen" id="P20702">
    <property type="glycosylation" value="9 sites, 16 N-linked glycans (4 sites)"/>
</dbReference>
<dbReference type="iPTMnet" id="P20702"/>
<dbReference type="PhosphoSitePlus" id="P20702"/>
<dbReference type="BioMuta" id="ITGAX"/>
<dbReference type="DMDM" id="146345441"/>
<dbReference type="MassIVE" id="P20702"/>
<dbReference type="PaxDb" id="9606-ENSP00000454623"/>
<dbReference type="PeptideAtlas" id="P20702"/>
<dbReference type="ProteomicsDB" id="53777"/>
<dbReference type="Antibodypedia" id="1499">
    <property type="antibodies" value="2498 antibodies from 51 providers"/>
</dbReference>
<dbReference type="CPTC" id="P20702">
    <property type="antibodies" value="1 antibody"/>
</dbReference>
<dbReference type="DNASU" id="3687"/>
<dbReference type="Ensembl" id="ENST00000268296.9">
    <property type="protein sequence ID" value="ENSP00000268296.5"/>
    <property type="gene ID" value="ENSG00000140678.17"/>
</dbReference>
<dbReference type="GeneID" id="3687"/>
<dbReference type="KEGG" id="hsa:3687"/>
<dbReference type="MANE-Select" id="ENST00000268296.9">
    <property type="protein sequence ID" value="ENSP00000268296.5"/>
    <property type="RefSeq nucleotide sequence ID" value="NM_000887.5"/>
    <property type="RefSeq protein sequence ID" value="NP_000878.2"/>
</dbReference>
<dbReference type="UCSC" id="uc002ebu.2">
    <property type="organism name" value="human"/>
</dbReference>
<dbReference type="AGR" id="HGNC:6152"/>
<dbReference type="CTD" id="3687"/>
<dbReference type="DisGeNET" id="3687"/>
<dbReference type="GeneCards" id="ITGAX"/>
<dbReference type="HGNC" id="HGNC:6152">
    <property type="gene designation" value="ITGAX"/>
</dbReference>
<dbReference type="HPA" id="ENSG00000140678">
    <property type="expression patterns" value="Tissue enhanced (bone marrow, lung, lymphoid tissue)"/>
</dbReference>
<dbReference type="MIM" id="151510">
    <property type="type" value="gene"/>
</dbReference>
<dbReference type="neXtProt" id="NX_P20702"/>
<dbReference type="OpenTargets" id="ENSG00000140678"/>
<dbReference type="PharmGKB" id="PA29952"/>
<dbReference type="VEuPathDB" id="HostDB:ENSG00000140678"/>
<dbReference type="eggNOG" id="KOG3637">
    <property type="taxonomic scope" value="Eukaryota"/>
</dbReference>
<dbReference type="GeneTree" id="ENSGT00940000154838"/>
<dbReference type="HOGENOM" id="CLU_004111_3_0_1"/>
<dbReference type="InParanoid" id="P20702"/>
<dbReference type="OMA" id="EITGDRW"/>
<dbReference type="OrthoDB" id="5317514at2759"/>
<dbReference type="PAN-GO" id="P20702">
    <property type="GO annotations" value="7 GO annotations based on evolutionary models"/>
</dbReference>
<dbReference type="PhylomeDB" id="P20702"/>
<dbReference type="TreeFam" id="TF105391"/>
<dbReference type="PathwayCommons" id="P20702"/>
<dbReference type="Reactome" id="R-HSA-202733">
    <property type="pathway name" value="Cell surface interactions at the vascular wall"/>
</dbReference>
<dbReference type="Reactome" id="R-HSA-216083">
    <property type="pathway name" value="Integrin cell surface interactions"/>
</dbReference>
<dbReference type="Reactome" id="R-HSA-3000178">
    <property type="pathway name" value="ECM proteoglycans"/>
</dbReference>
<dbReference type="Reactome" id="R-HSA-6785807">
    <property type="pathway name" value="Interleukin-4 and Interleukin-13 signaling"/>
</dbReference>
<dbReference type="Reactome" id="R-HSA-6798695">
    <property type="pathway name" value="Neutrophil degranulation"/>
</dbReference>
<dbReference type="SignaLink" id="P20702"/>
<dbReference type="SIGNOR" id="P20702"/>
<dbReference type="BioGRID-ORCS" id="3687">
    <property type="hits" value="12 hits in 1151 CRISPR screens"/>
</dbReference>
<dbReference type="ChiTaRS" id="ITGAX">
    <property type="organism name" value="human"/>
</dbReference>
<dbReference type="EvolutionaryTrace" id="P20702"/>
<dbReference type="GeneWiki" id="CD11c"/>
<dbReference type="GenomeRNAi" id="3687"/>
<dbReference type="Pharos" id="P20702">
    <property type="development level" value="Tbio"/>
</dbReference>
<dbReference type="PRO" id="PR:P20702"/>
<dbReference type="Proteomes" id="UP000005640">
    <property type="component" value="Chromosome 16"/>
</dbReference>
<dbReference type="RNAct" id="P20702">
    <property type="molecule type" value="protein"/>
</dbReference>
<dbReference type="Bgee" id="ENSG00000140678">
    <property type="expression patterns" value="Expressed in granulocyte and 106 other cell types or tissues"/>
</dbReference>
<dbReference type="ExpressionAtlas" id="P20702">
    <property type="expression patterns" value="baseline and differential"/>
</dbReference>
<dbReference type="GO" id="GO:0009986">
    <property type="term" value="C:cell surface"/>
    <property type="evidence" value="ECO:0000314"/>
    <property type="project" value="UniProtKB"/>
</dbReference>
<dbReference type="GO" id="GO:0009897">
    <property type="term" value="C:external side of plasma membrane"/>
    <property type="evidence" value="ECO:0000318"/>
    <property type="project" value="GO_Central"/>
</dbReference>
<dbReference type="GO" id="GO:0101003">
    <property type="term" value="C:ficolin-1-rich granule membrane"/>
    <property type="evidence" value="ECO:0000304"/>
    <property type="project" value="Reactome"/>
</dbReference>
<dbReference type="GO" id="GO:0034689">
    <property type="term" value="C:integrin alphaX-beta2 complex"/>
    <property type="evidence" value="ECO:0000353"/>
    <property type="project" value="ComplexPortal"/>
</dbReference>
<dbReference type="GO" id="GO:0008305">
    <property type="term" value="C:integrin complex"/>
    <property type="evidence" value="ECO:0000318"/>
    <property type="project" value="GO_Central"/>
</dbReference>
<dbReference type="GO" id="GO:0016020">
    <property type="term" value="C:membrane"/>
    <property type="evidence" value="ECO:0007005"/>
    <property type="project" value="UniProtKB"/>
</dbReference>
<dbReference type="GO" id="GO:0005886">
    <property type="term" value="C:plasma membrane"/>
    <property type="evidence" value="ECO:0000304"/>
    <property type="project" value="Reactome"/>
</dbReference>
<dbReference type="GO" id="GO:0030667">
    <property type="term" value="C:secretory granule membrane"/>
    <property type="evidence" value="ECO:0000304"/>
    <property type="project" value="Reactome"/>
</dbReference>
<dbReference type="GO" id="GO:0070821">
    <property type="term" value="C:tertiary granule membrane"/>
    <property type="evidence" value="ECO:0000304"/>
    <property type="project" value="Reactome"/>
</dbReference>
<dbReference type="GO" id="GO:0005178">
    <property type="term" value="F:integrin binding"/>
    <property type="evidence" value="ECO:0000318"/>
    <property type="project" value="GO_Central"/>
</dbReference>
<dbReference type="GO" id="GO:0046872">
    <property type="term" value="F:metal ion binding"/>
    <property type="evidence" value="ECO:0007669"/>
    <property type="project" value="UniProtKB-KW"/>
</dbReference>
<dbReference type="GO" id="GO:0030971">
    <property type="term" value="F:receptor tyrosine kinase binding"/>
    <property type="evidence" value="ECO:0000353"/>
    <property type="project" value="ARUK-UCL"/>
</dbReference>
<dbReference type="GO" id="GO:0038023">
    <property type="term" value="F:signaling receptor activity"/>
    <property type="evidence" value="ECO:0000304"/>
    <property type="project" value="ProtInc"/>
</dbReference>
<dbReference type="GO" id="GO:0009887">
    <property type="term" value="P:animal organ morphogenesis"/>
    <property type="evidence" value="ECO:0000304"/>
    <property type="project" value="ProtInc"/>
</dbReference>
<dbReference type="GO" id="GO:0007155">
    <property type="term" value="P:cell adhesion"/>
    <property type="evidence" value="ECO:0000304"/>
    <property type="project" value="ProtInc"/>
</dbReference>
<dbReference type="GO" id="GO:0033627">
    <property type="term" value="P:cell adhesion mediated by integrin"/>
    <property type="evidence" value="ECO:0000318"/>
    <property type="project" value="GO_Central"/>
</dbReference>
<dbReference type="GO" id="GO:0098609">
    <property type="term" value="P:cell-cell adhesion"/>
    <property type="evidence" value="ECO:0000318"/>
    <property type="project" value="GO_Central"/>
</dbReference>
<dbReference type="GO" id="GO:0007160">
    <property type="term" value="P:cell-matrix adhesion"/>
    <property type="evidence" value="ECO:0000303"/>
    <property type="project" value="ComplexPortal"/>
</dbReference>
<dbReference type="GO" id="GO:0051607">
    <property type="term" value="P:defense response to virus"/>
    <property type="evidence" value="ECO:0007669"/>
    <property type="project" value="Ensembl"/>
</dbReference>
<dbReference type="GO" id="GO:0034113">
    <property type="term" value="P:heterotypic cell-cell adhesion"/>
    <property type="evidence" value="ECO:0000315"/>
    <property type="project" value="UniProtKB"/>
</dbReference>
<dbReference type="GO" id="GO:0007229">
    <property type="term" value="P:integrin-mediated signaling pathway"/>
    <property type="evidence" value="ECO:0000318"/>
    <property type="project" value="GO_Central"/>
</dbReference>
<dbReference type="GO" id="GO:0045766">
    <property type="term" value="P:positive regulation of angiogenesis"/>
    <property type="evidence" value="ECO:0000315"/>
    <property type="project" value="ARUK-UCL"/>
</dbReference>
<dbReference type="GO" id="GO:0030335">
    <property type="term" value="P:positive regulation of cell migration"/>
    <property type="evidence" value="ECO:0000315"/>
    <property type="project" value="ARUK-UCL"/>
</dbReference>
<dbReference type="GO" id="GO:0008284">
    <property type="term" value="P:positive regulation of cell population proliferation"/>
    <property type="evidence" value="ECO:0000315"/>
    <property type="project" value="ARUK-UCL"/>
</dbReference>
<dbReference type="GO" id="GO:1905956">
    <property type="term" value="P:positive regulation of endothelial tube morphogenesis"/>
    <property type="evidence" value="ECO:0000315"/>
    <property type="project" value="ARUK-UCL"/>
</dbReference>
<dbReference type="GO" id="GO:0010628">
    <property type="term" value="P:positive regulation of gene expression"/>
    <property type="evidence" value="ECO:0000315"/>
    <property type="project" value="ARUK-UCL"/>
</dbReference>
<dbReference type="GO" id="GO:0031643">
    <property type="term" value="P:positive regulation of myelination"/>
    <property type="evidence" value="ECO:0000250"/>
    <property type="project" value="ARUK-UCL"/>
</dbReference>
<dbReference type="CDD" id="cd01469">
    <property type="entry name" value="vWA_integrins_alpha_subunit"/>
    <property type="match status" value="1"/>
</dbReference>
<dbReference type="FunFam" id="2.130.10.130:FF:000009">
    <property type="entry name" value="Alpha L integrin"/>
    <property type="match status" value="1"/>
</dbReference>
<dbReference type="FunFam" id="2.130.10.130:FF:000005">
    <property type="entry name" value="Integrin alpha L"/>
    <property type="match status" value="1"/>
</dbReference>
<dbReference type="FunFam" id="2.60.40.1510:FF:000009">
    <property type="entry name" value="Integrin alpha M"/>
    <property type="match status" value="1"/>
</dbReference>
<dbReference type="FunFam" id="2.60.40.1530:FF:000003">
    <property type="entry name" value="Integrin alpha M"/>
    <property type="match status" value="1"/>
</dbReference>
<dbReference type="FunFam" id="1.20.5.930:FF:000004">
    <property type="entry name" value="Integrin subunit alpha M"/>
    <property type="match status" value="1"/>
</dbReference>
<dbReference type="FunFam" id="3.40.50.410:FF:000012">
    <property type="entry name" value="Integrin, alpha 10"/>
    <property type="match status" value="1"/>
</dbReference>
<dbReference type="FunFam" id="2.60.40.1460:FF:000001">
    <property type="entry name" value="Integrin, alpha V"/>
    <property type="match status" value="1"/>
</dbReference>
<dbReference type="Gene3D" id="1.20.5.930">
    <property type="entry name" value="Bicelle-embedded integrin alpha(iib) transmembrane segment"/>
    <property type="match status" value="1"/>
</dbReference>
<dbReference type="Gene3D" id="2.130.10.130">
    <property type="entry name" value="Integrin alpha, N-terminal"/>
    <property type="match status" value="2"/>
</dbReference>
<dbReference type="Gene3D" id="2.60.40.1460">
    <property type="entry name" value="Integrin domains. Chain A, domain 2"/>
    <property type="match status" value="1"/>
</dbReference>
<dbReference type="Gene3D" id="2.60.40.1510">
    <property type="entry name" value="ntegrin, alpha v. Chain A, domain 3"/>
    <property type="match status" value="1"/>
</dbReference>
<dbReference type="Gene3D" id="2.60.40.1530">
    <property type="entry name" value="ntegrin, alpha v. Chain A, domain 4"/>
    <property type="match status" value="1"/>
</dbReference>
<dbReference type="InterPro" id="IPR013517">
    <property type="entry name" value="FG-GAP"/>
</dbReference>
<dbReference type="InterPro" id="IPR013519">
    <property type="entry name" value="Int_alpha_beta-p"/>
</dbReference>
<dbReference type="InterPro" id="IPR000413">
    <property type="entry name" value="Integrin_alpha"/>
</dbReference>
<dbReference type="InterPro" id="IPR018184">
    <property type="entry name" value="Integrin_alpha_C_CS"/>
</dbReference>
<dbReference type="InterPro" id="IPR013649">
    <property type="entry name" value="Integrin_alpha_Ig-like_1"/>
</dbReference>
<dbReference type="InterPro" id="IPR048285">
    <property type="entry name" value="Integrin_alpha_Ig-like_2"/>
</dbReference>
<dbReference type="InterPro" id="IPR028994">
    <property type="entry name" value="Integrin_alpha_N"/>
</dbReference>
<dbReference type="InterPro" id="IPR032695">
    <property type="entry name" value="Integrin_dom_sf"/>
</dbReference>
<dbReference type="InterPro" id="IPR048633">
    <property type="entry name" value="ITGAX-like_Ig_3"/>
</dbReference>
<dbReference type="InterPro" id="IPR002035">
    <property type="entry name" value="VWF_A"/>
</dbReference>
<dbReference type="InterPro" id="IPR036465">
    <property type="entry name" value="vWFA_dom_sf"/>
</dbReference>
<dbReference type="PANTHER" id="PTHR23220">
    <property type="entry name" value="INTEGRIN ALPHA"/>
    <property type="match status" value="1"/>
</dbReference>
<dbReference type="PANTHER" id="PTHR23220:SF118">
    <property type="entry name" value="INTEGRIN ALPHA-X"/>
    <property type="match status" value="1"/>
</dbReference>
<dbReference type="Pfam" id="PF01839">
    <property type="entry name" value="FG-GAP"/>
    <property type="match status" value="2"/>
</dbReference>
<dbReference type="Pfam" id="PF08441">
    <property type="entry name" value="Integrin_A_Ig_1"/>
    <property type="match status" value="1"/>
</dbReference>
<dbReference type="Pfam" id="PF20805">
    <property type="entry name" value="Integrin_A_Ig_2"/>
    <property type="match status" value="1"/>
</dbReference>
<dbReference type="Pfam" id="PF00357">
    <property type="entry name" value="Integrin_alpha"/>
    <property type="match status" value="1"/>
</dbReference>
<dbReference type="Pfam" id="PF21520">
    <property type="entry name" value="ITGAX-like_Ig_3"/>
    <property type="match status" value="1"/>
</dbReference>
<dbReference type="Pfam" id="PF00092">
    <property type="entry name" value="VWA"/>
    <property type="match status" value="1"/>
</dbReference>
<dbReference type="PRINTS" id="PR01185">
    <property type="entry name" value="INTEGRINA"/>
</dbReference>
<dbReference type="PRINTS" id="PR00453">
    <property type="entry name" value="VWFADOMAIN"/>
</dbReference>
<dbReference type="SMART" id="SM00191">
    <property type="entry name" value="Int_alpha"/>
    <property type="match status" value="5"/>
</dbReference>
<dbReference type="SMART" id="SM00327">
    <property type="entry name" value="VWA"/>
    <property type="match status" value="1"/>
</dbReference>
<dbReference type="SUPFAM" id="SSF69318">
    <property type="entry name" value="Integrin alpha N-terminal domain"/>
    <property type="match status" value="1"/>
</dbReference>
<dbReference type="SUPFAM" id="SSF69179">
    <property type="entry name" value="Integrin domains"/>
    <property type="match status" value="3"/>
</dbReference>
<dbReference type="SUPFAM" id="SSF53300">
    <property type="entry name" value="vWA-like"/>
    <property type="match status" value="1"/>
</dbReference>
<dbReference type="PROSITE" id="PS51470">
    <property type="entry name" value="FG_GAP"/>
    <property type="match status" value="7"/>
</dbReference>
<dbReference type="PROSITE" id="PS00242">
    <property type="entry name" value="INTEGRIN_ALPHA"/>
    <property type="match status" value="1"/>
</dbReference>
<dbReference type="PROSITE" id="PS50234">
    <property type="entry name" value="VWFA"/>
    <property type="match status" value="1"/>
</dbReference>
<name>ITAX_HUMAN</name>
<feature type="signal peptide" evidence="11">
    <location>
        <begin position="1"/>
        <end position="19"/>
    </location>
</feature>
<feature type="chain" id="PRO_0000016294" description="Integrin alpha-X">
    <location>
        <begin position="20"/>
        <end position="1163"/>
    </location>
</feature>
<feature type="topological domain" description="Extracellular" evidence="2">
    <location>
        <begin position="20"/>
        <end position="1107"/>
    </location>
</feature>
<feature type="transmembrane region" description="Helical" evidence="2">
    <location>
        <begin position="1108"/>
        <end position="1128"/>
    </location>
</feature>
<feature type="topological domain" description="Cytoplasmic" evidence="2">
    <location>
        <begin position="1129"/>
        <end position="1163"/>
    </location>
</feature>
<feature type="repeat" description="FG-GAP 1" evidence="4">
    <location>
        <begin position="23"/>
        <end position="78"/>
    </location>
</feature>
<feature type="repeat" description="FG-GAP 2" evidence="4">
    <location>
        <begin position="79"/>
        <end position="138"/>
    </location>
</feature>
<feature type="domain" description="VWFA" evidence="3">
    <location>
        <begin position="165"/>
        <end position="339"/>
    </location>
</feature>
<feature type="repeat" description="FG-GAP 3" evidence="4">
    <location>
        <begin position="340"/>
        <end position="391"/>
    </location>
</feature>
<feature type="repeat" description="FG-GAP 4" evidence="4">
    <location>
        <begin position="392"/>
        <end position="443"/>
    </location>
</feature>
<feature type="repeat" description="FG-GAP 5" evidence="4">
    <location>
        <begin position="444"/>
        <end position="504"/>
    </location>
</feature>
<feature type="repeat" description="FG-GAP 6" evidence="4">
    <location>
        <begin position="507"/>
        <end position="565"/>
    </location>
</feature>
<feature type="repeat" description="FG-GAP 7" evidence="4">
    <location>
        <begin position="570"/>
        <end position="630"/>
    </location>
</feature>
<feature type="short sequence motif" description="GFFKR motif">
    <location>
        <begin position="1131"/>
        <end position="1135"/>
    </location>
</feature>
<feature type="binding site">
    <location>
        <position position="157"/>
    </location>
    <ligand>
        <name>Mg(2+)</name>
        <dbReference type="ChEBI" id="CHEBI:18420"/>
    </ligand>
</feature>
<feature type="binding site">
    <location>
        <position position="159"/>
    </location>
    <ligand>
        <name>Mg(2+)</name>
        <dbReference type="ChEBI" id="CHEBI:18420"/>
    </ligand>
</feature>
<feature type="binding site">
    <location>
        <position position="161"/>
    </location>
    <ligand>
        <name>Mg(2+)</name>
        <dbReference type="ChEBI" id="CHEBI:18420"/>
    </ligand>
</feature>
<feature type="binding site">
    <location>
        <position position="259"/>
    </location>
    <ligand>
        <name>Mg(2+)</name>
        <dbReference type="ChEBI" id="CHEBI:18420"/>
    </ligand>
</feature>
<feature type="binding site" evidence="1">
    <location>
        <position position="466"/>
    </location>
    <ligand>
        <name>Ca(2+)</name>
        <dbReference type="ChEBI" id="CHEBI:29108"/>
        <label>1</label>
    </ligand>
</feature>
<feature type="binding site" evidence="1">
    <location>
        <position position="468"/>
    </location>
    <ligand>
        <name>Ca(2+)</name>
        <dbReference type="ChEBI" id="CHEBI:29108"/>
        <label>1</label>
    </ligand>
</feature>
<feature type="binding site" evidence="1">
    <location>
        <position position="470"/>
    </location>
    <ligand>
        <name>Ca(2+)</name>
        <dbReference type="ChEBI" id="CHEBI:29108"/>
        <label>1</label>
    </ligand>
</feature>
<feature type="binding site" evidence="1">
    <location>
        <position position="474"/>
    </location>
    <ligand>
        <name>Ca(2+)</name>
        <dbReference type="ChEBI" id="CHEBI:29108"/>
        <label>1</label>
    </ligand>
</feature>
<feature type="binding site" evidence="1">
    <location>
        <position position="530"/>
    </location>
    <ligand>
        <name>Ca(2+)</name>
        <dbReference type="ChEBI" id="CHEBI:29108"/>
        <label>2</label>
    </ligand>
</feature>
<feature type="binding site" evidence="1">
    <location>
        <position position="532"/>
    </location>
    <ligand>
        <name>Ca(2+)</name>
        <dbReference type="ChEBI" id="CHEBI:29108"/>
        <label>2</label>
    </ligand>
</feature>
<feature type="binding site" evidence="1">
    <location>
        <position position="534"/>
    </location>
    <ligand>
        <name>Ca(2+)</name>
        <dbReference type="ChEBI" id="CHEBI:29108"/>
        <label>2</label>
    </ligand>
</feature>
<feature type="binding site" evidence="1">
    <location>
        <position position="538"/>
    </location>
    <ligand>
        <name>Ca(2+)</name>
        <dbReference type="ChEBI" id="CHEBI:29108"/>
        <label>2</label>
    </ligand>
</feature>
<feature type="binding site" evidence="1">
    <location>
        <position position="593"/>
    </location>
    <ligand>
        <name>Ca(2+)</name>
        <dbReference type="ChEBI" id="CHEBI:29108"/>
        <label>3</label>
    </ligand>
</feature>
<feature type="binding site" evidence="1">
    <location>
        <position position="597"/>
    </location>
    <ligand>
        <name>Ca(2+)</name>
        <dbReference type="ChEBI" id="CHEBI:29108"/>
        <label>3</label>
    </ligand>
</feature>
<feature type="binding site" evidence="1">
    <location>
        <position position="601"/>
    </location>
    <ligand>
        <name>Ca(2+)</name>
        <dbReference type="ChEBI" id="CHEBI:29108"/>
        <label>3</label>
    </ligand>
</feature>
<feature type="glycosylation site" description="N-linked (GlcNAc...) asparagine" evidence="7">
    <location>
        <position position="61"/>
    </location>
</feature>
<feature type="glycosylation site" description="N-linked (GlcNAc...) asparagine" evidence="2">
    <location>
        <position position="89"/>
    </location>
</feature>
<feature type="glycosylation site" description="N-linked (GlcNAc...) asparagine" evidence="7">
    <location>
        <position position="392"/>
    </location>
</feature>
<feature type="glycosylation site" description="N-linked (GlcNAc...) asparagine" evidence="7">
    <location>
        <position position="697"/>
    </location>
</feature>
<feature type="glycosylation site" description="N-linked (GlcNAc...) asparagine" evidence="7">
    <location>
        <position position="735"/>
    </location>
</feature>
<feature type="glycosylation site" description="N-linked (GlcNAc...) asparagine" evidence="6 7">
    <location>
        <position position="899"/>
    </location>
</feature>
<feature type="glycosylation site" description="N-linked (GlcNAc...) asparagine" evidence="2">
    <location>
        <position position="939"/>
    </location>
</feature>
<feature type="glycosylation site" description="N-linked (GlcNAc...) asparagine" evidence="2">
    <location>
        <position position="1050"/>
    </location>
</feature>
<feature type="disulfide bond" evidence="7">
    <location>
        <begin position="69"/>
        <end position="76"/>
    </location>
</feature>
<feature type="disulfide bond" evidence="7">
    <location>
        <begin position="108"/>
        <end position="126"/>
    </location>
</feature>
<feature type="disulfide bond" evidence="7">
    <location>
        <begin position="116"/>
        <end position="145"/>
    </location>
</feature>
<feature type="disulfide bond" evidence="7">
    <location>
        <begin position="495"/>
        <end position="506"/>
    </location>
</feature>
<feature type="disulfide bond" evidence="7">
    <location>
        <begin position="639"/>
        <end position="722"/>
    </location>
</feature>
<feature type="disulfide bond" evidence="7">
    <location>
        <begin position="655"/>
        <end position="712"/>
    </location>
</feature>
<feature type="disulfide bond" evidence="7">
    <location>
        <begin position="771"/>
        <end position="777"/>
    </location>
</feature>
<feature type="disulfide bond" evidence="7">
    <location>
        <begin position="848"/>
        <end position="863"/>
    </location>
</feature>
<feature type="disulfide bond" evidence="7">
    <location>
        <begin position="998"/>
        <end position="1022"/>
    </location>
</feature>
<feature type="disulfide bond" evidence="7">
    <location>
        <begin position="1027"/>
        <end position="1032"/>
    </location>
</feature>
<feature type="sequence variant" id="VAR_018672" description="In dbSNP:rs2230424.">
    <original>W</original>
    <variation>R</variation>
    <location>
        <position position="48"/>
    </location>
</feature>
<feature type="sequence variant" id="VAR_049632" description="In dbSNP:rs1574566." evidence="9">
    <original>F</original>
    <variation>L</variation>
    <location>
        <position position="201"/>
    </location>
</feature>
<feature type="sequence variant" id="VAR_031925" description="In dbSNP:rs2230428." evidence="9 10">
    <original>A</original>
    <variation>T</variation>
    <location>
        <position position="251"/>
    </location>
</feature>
<feature type="sequence variant" id="VAR_031926" description="In dbSNP:rs2230429.">
    <original>P</original>
    <variation>R</variation>
    <location>
        <position position="517"/>
    </location>
</feature>
<feature type="sequence variant" id="VAR_031927" description="In dbSNP:rs17853815." evidence="5">
    <original>E</original>
    <variation>K</variation>
    <location>
        <position position="547"/>
    </location>
</feature>
<feature type="sequence variant" id="VAR_059363" description="In dbSNP:rs189592567.">
    <original>I</original>
    <variation>V</variation>
    <location>
        <position position="564"/>
    </location>
</feature>
<feature type="sequence variant" id="VAR_031928" description="In dbSNP:rs2230427.">
    <original>F</original>
    <variation>L</variation>
    <location>
        <position position="971"/>
    </location>
</feature>
<feature type="sequence variant" id="VAR_066662" description="In dbSNP:rs181404376." evidence="8">
    <original>A</original>
    <variation>V</variation>
    <location>
        <position position="1012"/>
    </location>
</feature>
<feature type="sequence conflict" description="In Ref. 1; AAA59180 and 2; AAA51620." evidence="12" ref="1 2">
    <original>S</original>
    <variation>T</variation>
    <location>
        <position position="209"/>
    </location>
</feature>
<feature type="sequence conflict" description="In Ref. 2; AAA51620." evidence="12" ref="2">
    <original>S</original>
    <variation>T</variation>
    <location>
        <position position="266"/>
    </location>
</feature>
<feature type="sequence conflict" description="In Ref. 2; AAA51620." evidence="12" ref="2">
    <original>N</original>
    <variation>T</variation>
    <location>
        <position position="327"/>
    </location>
</feature>
<feature type="sequence conflict" description="In Ref. 2; AAA51620." evidence="12" ref="2">
    <original>K</original>
    <variation>R</variation>
    <location>
        <position position="330"/>
    </location>
</feature>
<feature type="sequence conflict" description="In Ref. 2; AAA51620." evidence="12" ref="2">
    <original>A</original>
    <variation>P</variation>
    <location>
        <position position="335"/>
    </location>
</feature>
<feature type="sequence conflict" description="In Ref. 2; AAA51620." evidence="12" ref="2">
    <original>A</original>
    <variation>P</variation>
    <location>
        <position position="460"/>
    </location>
</feature>
<feature type="sequence conflict" description="In Ref. 1; AAA59180." evidence="12" ref="1">
    <original>S</original>
    <variation>T</variation>
    <location>
        <position position="469"/>
    </location>
</feature>
<feature type="sequence conflict" description="In Ref. 2; AAA51620." evidence="12" ref="2">
    <original>A</original>
    <variation>P</variation>
    <location>
        <position position="480"/>
    </location>
</feature>
<feature type="sequence conflict" description="In Ref. 2; AAA51620." evidence="12" ref="2">
    <original>G</original>
    <variation>A</variation>
    <location>
        <position position="490"/>
    </location>
</feature>
<feature type="sequence conflict" description="In Ref. 1; AAA59180." evidence="12" ref="1">
    <original>D</original>
    <variation>L</variation>
    <location>
        <position position="756"/>
    </location>
</feature>
<feature type="sequence conflict" description="In Ref. 4; AAH38237." evidence="12" ref="4">
    <original>I</original>
    <variation>V</variation>
    <location>
        <position position="819"/>
    </location>
</feature>
<feature type="sequence conflict" description="In Ref. 2; AAA51620." evidence="12" ref="2">
    <original>H</original>
    <variation>L</variation>
    <location>
        <position position="990"/>
    </location>
</feature>
<feature type="sequence conflict" description="In Ref. 2; AAA51620." evidence="12" ref="2">
    <original>P</original>
    <variation>G</variation>
    <location>
        <position position="1005"/>
    </location>
</feature>
<feature type="sequence conflict" description="In Ref. 4; AAH38237." evidence="12" ref="4">
    <original>SEK</original>
    <variation>TPHYPQDNV</variation>
    <location>
        <begin position="1161"/>
        <end position="1163"/>
    </location>
</feature>
<feature type="strand" evidence="16">
    <location>
        <begin position="24"/>
        <end position="26"/>
    </location>
</feature>
<feature type="strand" evidence="16">
    <location>
        <begin position="28"/>
        <end position="31"/>
    </location>
</feature>
<feature type="turn" evidence="16">
    <location>
        <begin position="35"/>
        <end position="38"/>
    </location>
</feature>
<feature type="strand" evidence="16">
    <location>
        <begin position="39"/>
        <end position="44"/>
    </location>
</feature>
<feature type="turn" evidence="16">
    <location>
        <begin position="45"/>
        <end position="47"/>
    </location>
</feature>
<feature type="strand" evidence="16">
    <location>
        <begin position="48"/>
        <end position="59"/>
    </location>
</feature>
<feature type="strand" evidence="16">
    <location>
        <begin position="62"/>
        <end position="69"/>
    </location>
</feature>
<feature type="turn" evidence="16">
    <location>
        <begin position="71"/>
        <end position="73"/>
    </location>
</feature>
<feature type="strand" evidence="16">
    <location>
        <begin position="75"/>
        <end position="78"/>
    </location>
</feature>
<feature type="strand" evidence="18">
    <location>
        <begin position="87"/>
        <end position="89"/>
    </location>
</feature>
<feature type="strand" evidence="16">
    <location>
        <begin position="94"/>
        <end position="99"/>
    </location>
</feature>
<feature type="turn" evidence="16">
    <location>
        <begin position="100"/>
        <end position="103"/>
    </location>
</feature>
<feature type="strand" evidence="16">
    <location>
        <begin position="104"/>
        <end position="116"/>
    </location>
</feature>
<feature type="strand" evidence="16">
    <location>
        <begin position="119"/>
        <end position="129"/>
    </location>
</feature>
<feature type="strand" evidence="17">
    <location>
        <begin position="131"/>
        <end position="133"/>
    </location>
</feature>
<feature type="strand" evidence="16">
    <location>
        <begin position="136"/>
        <end position="141"/>
    </location>
</feature>
<feature type="strand" evidence="13">
    <location>
        <begin position="150"/>
        <end position="157"/>
    </location>
</feature>
<feature type="helix" evidence="13">
    <location>
        <begin position="164"/>
        <end position="178"/>
    </location>
</feature>
<feature type="turn" evidence="13">
    <location>
        <begin position="183"/>
        <end position="185"/>
    </location>
</feature>
<feature type="strand" evidence="13">
    <location>
        <begin position="186"/>
        <end position="201"/>
    </location>
</feature>
<feature type="helix" evidence="13">
    <location>
        <begin position="203"/>
        <end position="208"/>
    </location>
</feature>
<feature type="helix" evidence="13">
    <location>
        <begin position="212"/>
        <end position="216"/>
    </location>
</feature>
<feature type="helix" evidence="13">
    <location>
        <begin position="228"/>
        <end position="236"/>
    </location>
</feature>
<feature type="turn" evidence="13">
    <location>
        <begin position="237"/>
        <end position="240"/>
    </location>
</feature>
<feature type="helix" evidence="13">
    <location>
        <begin position="242"/>
        <end position="244"/>
    </location>
</feature>
<feature type="strand" evidence="13">
    <location>
        <begin position="250"/>
        <end position="260"/>
    </location>
</feature>
<feature type="helix" evidence="13">
    <location>
        <begin position="269"/>
        <end position="278"/>
    </location>
</feature>
<feature type="strand" evidence="13">
    <location>
        <begin position="282"/>
        <end position="289"/>
    </location>
</feature>
<feature type="helix" evidence="13">
    <location>
        <begin position="290"/>
        <end position="293"/>
    </location>
</feature>
<feature type="helix" evidence="13">
    <location>
        <begin position="298"/>
        <end position="304"/>
    </location>
</feature>
<feature type="strand" evidence="13">
    <location>
        <begin position="307"/>
        <end position="309"/>
    </location>
</feature>
<feature type="helix" evidence="13">
    <location>
        <begin position="310"/>
        <end position="312"/>
    </location>
</feature>
<feature type="strand" evidence="13">
    <location>
        <begin position="313"/>
        <end position="318"/>
    </location>
</feature>
<feature type="helix" evidence="13">
    <location>
        <begin position="319"/>
        <end position="325"/>
    </location>
</feature>
<feature type="helix" evidence="13">
    <location>
        <begin position="326"/>
        <end position="334"/>
    </location>
</feature>
<feature type="helix" evidence="16">
    <location>
        <begin position="336"/>
        <end position="338"/>
    </location>
</feature>
<feature type="turn" evidence="16">
    <location>
        <begin position="341"/>
        <end position="343"/>
    </location>
</feature>
<feature type="strand" evidence="15">
    <location>
        <begin position="348"/>
        <end position="351"/>
    </location>
</feature>
<feature type="strand" evidence="16">
    <location>
        <begin position="354"/>
        <end position="361"/>
    </location>
</feature>
<feature type="strand" evidence="16">
    <location>
        <begin position="364"/>
        <end position="369"/>
    </location>
</feature>
<feature type="helix" evidence="16">
    <location>
        <begin position="372"/>
        <end position="375"/>
    </location>
</feature>
<feature type="strand" evidence="16">
    <location>
        <begin position="379"/>
        <end position="381"/>
    </location>
</feature>
<feature type="strand" evidence="15">
    <location>
        <begin position="384"/>
        <end position="386"/>
    </location>
</feature>
<feature type="strand" evidence="16">
    <location>
        <begin position="389"/>
        <end position="391"/>
    </location>
</feature>
<feature type="helix" evidence="16">
    <location>
        <begin position="398"/>
        <end position="400"/>
    </location>
</feature>
<feature type="strand" evidence="16">
    <location>
        <begin position="407"/>
        <end position="424"/>
    </location>
</feature>
<feature type="helix" evidence="16">
    <location>
        <begin position="427"/>
        <end position="429"/>
    </location>
</feature>
<feature type="strand" evidence="16">
    <location>
        <begin position="432"/>
        <end position="439"/>
    </location>
</feature>
<feature type="strand" evidence="16">
    <location>
        <begin position="442"/>
        <end position="450"/>
    </location>
</feature>
<feature type="strand" evidence="16">
    <location>
        <begin position="460"/>
        <end position="465"/>
    </location>
</feature>
<feature type="strand" evidence="16">
    <location>
        <begin position="470"/>
        <end position="472"/>
    </location>
</feature>
<feature type="strand" evidence="16">
    <location>
        <begin position="475"/>
        <end position="484"/>
    </location>
</feature>
<feature type="strand" evidence="16">
    <location>
        <begin position="489"/>
        <end position="496"/>
    </location>
</feature>
<feature type="strand" evidence="16">
    <location>
        <begin position="508"/>
        <end position="510"/>
    </location>
</feature>
<feature type="strand" evidence="17">
    <location>
        <begin position="514"/>
        <end position="521"/>
    </location>
</feature>
<feature type="strand" evidence="16">
    <location>
        <begin position="523"/>
        <end position="529"/>
    </location>
</feature>
<feature type="strand" evidence="16">
    <location>
        <begin position="531"/>
        <end position="535"/>
    </location>
</feature>
<feature type="strand" evidence="16">
    <location>
        <begin position="538"/>
        <end position="543"/>
    </location>
</feature>
<feature type="helix" evidence="16">
    <location>
        <begin position="546"/>
        <end position="549"/>
    </location>
</feature>
<feature type="strand" evidence="16">
    <location>
        <begin position="551"/>
        <end position="556"/>
    </location>
</feature>
<feature type="turn" evidence="16">
    <location>
        <begin position="560"/>
        <end position="562"/>
    </location>
</feature>
<feature type="strand" evidence="16">
    <location>
        <begin position="569"/>
        <end position="573"/>
    </location>
</feature>
<feature type="helix" evidence="16">
    <location>
        <begin position="574"/>
        <end position="577"/>
    </location>
</feature>
<feature type="strand" evidence="16">
    <location>
        <begin position="586"/>
        <end position="592"/>
    </location>
</feature>
<feature type="strand" evidence="16">
    <location>
        <begin position="595"/>
        <end position="599"/>
    </location>
</feature>
<feature type="strand" evidence="16">
    <location>
        <begin position="601"/>
        <end position="606"/>
    </location>
</feature>
<feature type="strand" evidence="16">
    <location>
        <begin position="609"/>
        <end position="615"/>
    </location>
</feature>
<feature type="strand" evidence="16">
    <location>
        <begin position="618"/>
        <end position="632"/>
    </location>
</feature>
<feature type="turn" evidence="16">
    <location>
        <begin position="634"/>
        <end position="636"/>
    </location>
</feature>
<feature type="strand" evidence="15">
    <location>
        <begin position="641"/>
        <end position="643"/>
    </location>
</feature>
<feature type="strand" evidence="16">
    <location>
        <begin position="648"/>
        <end position="661"/>
    </location>
</feature>
<feature type="turn" evidence="15">
    <location>
        <begin position="662"/>
        <end position="664"/>
    </location>
</feature>
<feature type="turn" evidence="18">
    <location>
        <begin position="668"/>
        <end position="670"/>
    </location>
</feature>
<feature type="strand" evidence="16">
    <location>
        <begin position="673"/>
        <end position="682"/>
    </location>
</feature>
<feature type="strand" evidence="15">
    <location>
        <begin position="685"/>
        <end position="687"/>
    </location>
</feature>
<feature type="turn" evidence="16">
    <location>
        <begin position="693"/>
        <end position="695"/>
    </location>
</feature>
<feature type="strand" evidence="16">
    <location>
        <begin position="696"/>
        <end position="706"/>
    </location>
</feature>
<feature type="strand" evidence="16">
    <location>
        <begin position="708"/>
        <end position="719"/>
    </location>
</feature>
<feature type="strand" evidence="18">
    <location>
        <begin position="726"/>
        <end position="728"/>
    </location>
</feature>
<feature type="strand" evidence="16">
    <location>
        <begin position="730"/>
        <end position="740"/>
    </location>
</feature>
<feature type="turn" evidence="16">
    <location>
        <begin position="744"/>
        <end position="747"/>
    </location>
</feature>
<feature type="strand" evidence="16">
    <location>
        <begin position="760"/>
        <end position="765"/>
    </location>
</feature>
<feature type="strand" evidence="16">
    <location>
        <begin position="772"/>
        <end position="774"/>
    </location>
</feature>
<feature type="strand" evidence="16">
    <location>
        <begin position="782"/>
        <end position="786"/>
    </location>
</feature>
<feature type="strand" evidence="16">
    <location>
        <begin position="791"/>
        <end position="795"/>
    </location>
</feature>
<feature type="strand" evidence="16">
    <location>
        <begin position="800"/>
        <end position="808"/>
    </location>
</feature>
<feature type="strand" evidence="16">
    <location>
        <begin position="814"/>
        <end position="824"/>
    </location>
</feature>
<feature type="strand" evidence="16">
    <location>
        <begin position="827"/>
        <end position="829"/>
    </location>
</feature>
<feature type="strand" evidence="16">
    <location>
        <begin position="838"/>
        <end position="841"/>
    </location>
</feature>
<feature type="strand" evidence="16">
    <location>
        <begin position="847"/>
        <end position="853"/>
    </location>
</feature>
<feature type="turn" evidence="16">
    <location>
        <begin position="854"/>
        <end position="857"/>
    </location>
</feature>
<feature type="strand" evidence="16">
    <location>
        <begin position="858"/>
        <end position="870"/>
    </location>
</feature>
<feature type="strand" evidence="16">
    <location>
        <begin position="875"/>
        <end position="884"/>
    </location>
</feature>
<feature type="strand" evidence="16">
    <location>
        <begin position="892"/>
        <end position="901"/>
    </location>
</feature>
<feature type="strand" evidence="18">
    <location>
        <begin position="908"/>
        <end position="910"/>
    </location>
</feature>
<feature type="strand" evidence="16">
    <location>
        <begin position="914"/>
        <end position="924"/>
    </location>
</feature>
<feature type="strand" evidence="16">
    <location>
        <begin position="926"/>
        <end position="930"/>
    </location>
</feature>
<feature type="strand" evidence="17">
    <location>
        <begin position="932"/>
        <end position="934"/>
    </location>
</feature>
<feature type="strand" evidence="16">
    <location>
        <begin position="937"/>
        <end position="941"/>
    </location>
</feature>
<feature type="strand" evidence="16">
    <location>
        <begin position="948"/>
        <end position="959"/>
    </location>
</feature>
<feature type="strand" evidence="16">
    <location>
        <begin position="961"/>
        <end position="963"/>
    </location>
</feature>
<feature type="strand" evidence="16">
    <location>
        <begin position="965"/>
        <end position="977"/>
    </location>
</feature>
<feature type="strand" evidence="16">
    <location>
        <begin position="980"/>
        <end position="989"/>
    </location>
</feature>
<feature type="strand" evidence="17">
    <location>
        <begin position="991"/>
        <end position="993"/>
    </location>
</feature>
<feature type="strand" evidence="16">
    <location>
        <begin position="999"/>
        <end position="1003"/>
    </location>
</feature>
<feature type="helix" evidence="16">
    <location>
        <begin position="1010"/>
        <end position="1016"/>
    </location>
</feature>
<feature type="strand" evidence="17">
    <location>
        <begin position="1019"/>
        <end position="1021"/>
    </location>
</feature>
<feature type="turn" evidence="16">
    <location>
        <begin position="1022"/>
        <end position="1024"/>
    </location>
</feature>
<feature type="strand" evidence="16">
    <location>
        <begin position="1025"/>
        <end position="1037"/>
    </location>
</feature>
<feature type="strand" evidence="16">
    <location>
        <begin position="1042"/>
        <end position="1053"/>
    </location>
</feature>
<feature type="helix" evidence="16">
    <location>
        <begin position="1054"/>
        <end position="1058"/>
    </location>
</feature>
<feature type="strand" evidence="16">
    <location>
        <begin position="1062"/>
        <end position="1073"/>
    </location>
</feature>
<feature type="turn" evidence="16">
    <location>
        <begin position="1076"/>
        <end position="1078"/>
    </location>
</feature>
<feature type="strand" evidence="16">
    <location>
        <begin position="1079"/>
        <end position="1081"/>
    </location>
</feature>
<feature type="helix" evidence="16">
    <location>
        <begin position="1086"/>
        <end position="1089"/>
    </location>
</feature>
<feature type="strand" evidence="16">
    <location>
        <begin position="1090"/>
        <end position="1100"/>
    </location>
</feature>
<feature type="helix" evidence="14">
    <location>
        <begin position="1133"/>
        <end position="1144"/>
    </location>
</feature>
<feature type="strand" evidence="14">
    <location>
        <begin position="1147"/>
        <end position="1149"/>
    </location>
</feature>
<feature type="turn" evidence="14">
    <location>
        <begin position="1150"/>
        <end position="1154"/>
    </location>
</feature>
<feature type="turn" evidence="14">
    <location>
        <begin position="1160"/>
        <end position="1162"/>
    </location>
</feature>
<gene>
    <name type="primary">ITGAX</name>
    <name type="synonym">CD11C</name>
</gene>
<accession>P20702</accession>
<accession>Q8IVA6</accession>
<evidence type="ECO:0000250" key="1">
    <source>
        <dbReference type="UniProtKB" id="P08648"/>
    </source>
</evidence>
<evidence type="ECO:0000255" key="2"/>
<evidence type="ECO:0000255" key="3">
    <source>
        <dbReference type="PROSITE-ProRule" id="PRU00219"/>
    </source>
</evidence>
<evidence type="ECO:0000255" key="4">
    <source>
        <dbReference type="PROSITE-ProRule" id="PRU00803"/>
    </source>
</evidence>
<evidence type="ECO:0000269" key="5">
    <source>
    </source>
</evidence>
<evidence type="ECO:0000269" key="6">
    <source>
    </source>
</evidence>
<evidence type="ECO:0000269" key="7">
    <source>
    </source>
</evidence>
<evidence type="ECO:0000269" key="8">
    <source>
    </source>
</evidence>
<evidence type="ECO:0000269" key="9">
    <source>
    </source>
</evidence>
<evidence type="ECO:0000269" key="10">
    <source>
    </source>
</evidence>
<evidence type="ECO:0000269" key="11">
    <source>
    </source>
</evidence>
<evidence type="ECO:0000305" key="12"/>
<evidence type="ECO:0007829" key="13">
    <source>
        <dbReference type="PDB" id="1N3Y"/>
    </source>
</evidence>
<evidence type="ECO:0007829" key="14">
    <source>
        <dbReference type="PDB" id="2LUV"/>
    </source>
</evidence>
<evidence type="ECO:0007829" key="15">
    <source>
        <dbReference type="PDB" id="3K6S"/>
    </source>
</evidence>
<evidence type="ECO:0007829" key="16">
    <source>
        <dbReference type="PDB" id="4NEH"/>
    </source>
</evidence>
<evidence type="ECO:0007829" key="17">
    <source>
        <dbReference type="PDB" id="4NEN"/>
    </source>
</evidence>
<evidence type="ECO:0007829" key="18">
    <source>
        <dbReference type="PDB" id="5ES4"/>
    </source>
</evidence>
<comment type="function">
    <text>Integrin alpha-X/beta-2 is a receptor for fibrinogen. It recognizes the sequence G-P-R in fibrinogen. It mediates cell-cell interaction during inflammatory responses. It is especially important in monocyte adhesion and chemotaxis.</text>
</comment>
<comment type="subunit">
    <text evidence="7">Heterodimer of an alpha and a beta subunit. Alpha-X associates with beta-2.</text>
</comment>
<comment type="interaction">
    <interactant intactId="EBI-2568308">
        <id>P20702</id>
    </interactant>
    <interactant intactId="EBI-300173">
        <id>P05107</id>
        <label>ITGB2</label>
    </interactant>
    <organismsDiffer>false</organismsDiffer>
    <experiments>3</experiments>
</comment>
<comment type="subcellular location">
    <subcellularLocation>
        <location>Membrane</location>
        <topology>Single-pass type I membrane protein</topology>
    </subcellularLocation>
</comment>
<comment type="tissue specificity">
    <text>Predominantly expressed in monocytes and granulocytes.</text>
</comment>
<comment type="domain">
    <text>The integrin I-domain (insert) is a VWFA domain. Integrins with I-domains do not undergo protease cleavage.</text>
</comment>
<comment type="similarity">
    <text evidence="12">Belongs to the integrin alpha chain family.</text>
</comment>
<protein>
    <recommendedName>
        <fullName>Integrin alpha-X</fullName>
    </recommendedName>
    <alternativeName>
        <fullName>CD11 antigen-like family member C</fullName>
    </alternativeName>
    <alternativeName>
        <fullName>Leu M5</fullName>
    </alternativeName>
    <alternativeName>
        <fullName>Leukocyte adhesion glycoprotein p150,95 alpha chain</fullName>
    </alternativeName>
    <alternativeName>
        <fullName>Leukocyte adhesion receptor p150,95</fullName>
    </alternativeName>
    <cdAntigenName>CD11c</cdAntigenName>
</protein>
<keyword id="KW-0002">3D-structure</keyword>
<keyword id="KW-0106">Calcium</keyword>
<keyword id="KW-0130">Cell adhesion</keyword>
<keyword id="KW-0903">Direct protein sequencing</keyword>
<keyword id="KW-1015">Disulfide bond</keyword>
<keyword id="KW-0325">Glycoprotein</keyword>
<keyword id="KW-0401">Integrin</keyword>
<keyword id="KW-0460">Magnesium</keyword>
<keyword id="KW-0472">Membrane</keyword>
<keyword id="KW-0479">Metal-binding</keyword>
<keyword id="KW-1267">Proteomics identification</keyword>
<keyword id="KW-0675">Receptor</keyword>
<keyword id="KW-1185">Reference proteome</keyword>
<keyword id="KW-0677">Repeat</keyword>
<keyword id="KW-0732">Signal</keyword>
<keyword id="KW-0812">Transmembrane</keyword>
<keyword id="KW-1133">Transmembrane helix</keyword>
<sequence length="1163" mass="127829">MTRTRAALLLFTALATSLGFNLDTEELTAFRVDSAGFGDSVVQYANSWVVVGAPQKITAANQTGGLYQCGYSTGACEPIGLQVPPEAVNMSLGLSLASTTSPSQLLACGPTVHHECGRNMYLTGLCFLLGPTQLTQRLPVSRQECPRQEQDIVFLIDGSGSISSRNFATMMNFVRAVISQFQRPSTQFSLMQFSNKFQTHFTFEEFRRSSNPLSLLASVHQLQGFTYTATAIQNVVHRLFHASYGARRDAAKILIVITDGKKEGDSLDYKDVIPMADAAGIIRYAIGVGLAFQNRNSWKELNDIASKPSQEHIFKVEDFDALKDIQNQLKEKIFAIEGTETTSSSSFELEMAQEGFSAVFTPDGPVLGAVGSFTWSGGAFLYPPNMSPTFINMSQENVDMRDSYLGYSTELALWKGVQSLVLGAPRYQHTGKAVIFTQVSRQWRMKAEVTGTQIGSYFGASLCSVDVDSDGSTDLVLIGAPHYYEQTRGGQVSVCPLPRGWRRWWCDAVLYGEQGHPWGRFGAALTVLGDVNGDKLTDVVIGAPGEEENRGAVYLFHGVLGPSISPSHSQRIAGSQLSSRLQYFGQALSGGQDLTQDGLVDLAVGARGQVLLLRTRPVLWVGVSMQFIPAEIPRSAFECREQVVSEQTLVQSNICLYIDKRSKNLLGSRDLQSSVTLDLALDPGRLSPRATFQETKNRSLSRVRVLGLKAHCENFNLLLPSCVEDSVTPITLRLNFTLVGKPLLAFRNLRPMLAADAQRYFTASLPFEKNCGADHICQDNLGISFSFPGLKSLLVGSNLELNAEVMVWNDGEDSYGTTITFSHPAGLSYRYVAEGQKQGQLRSLHLTCDSAPVGSQGTWSTSCRINHLIFRGGAQITFLATFDVSPKAVLGDRLLLTANVSSENNTPRTSKTTFQLELPVKYAVYTVVSSHEQFTKYLNFSESEEKESHVAMHRYQVNNLGQRDLPVSINFWVPVELNQEAVWMDVEVSHPQNPSLRCSSEKIAPPASDFLAHIQKNPVLDCSIAGCLRFRCDVPSFSVQEELDFTLKGNLSFGWVRQILQKKVSVVSVAEITFDTSVYSQLPGQEAFMRAQTTTVLEKYKVHNPTPLIVGSSIGGLLLLALITAVLYKVGFFKRQYKEMMEEANGQIAPENGTQTPSPPSEK</sequence>
<organism>
    <name type="scientific">Homo sapiens</name>
    <name type="common">Human</name>
    <dbReference type="NCBI Taxonomy" id="9606"/>
    <lineage>
        <taxon>Eukaryota</taxon>
        <taxon>Metazoa</taxon>
        <taxon>Chordata</taxon>
        <taxon>Craniata</taxon>
        <taxon>Vertebrata</taxon>
        <taxon>Euteleostomi</taxon>
        <taxon>Mammalia</taxon>
        <taxon>Eutheria</taxon>
        <taxon>Euarchontoglires</taxon>
        <taxon>Primates</taxon>
        <taxon>Haplorrhini</taxon>
        <taxon>Catarrhini</taxon>
        <taxon>Hominidae</taxon>
        <taxon>Homo</taxon>
    </lineage>
</organism>